<comment type="function">
    <text>Plays a role in the competence of cells to be transformed. It inhibits the activity of the DNA-entry nuclease.</text>
</comment>
<comment type="subunit">
    <text>This protein is a subunit of a 75 kDa protein complex, which governs binding and entry of donor DNA. The complex is a tetramer of two subunits of the DNA-entry nuclease and two subunits of a competence-specific protein. Only the complex is able to bind ds- and ss-DNA.</text>
</comment>
<comment type="subcellular location">
    <subcellularLocation>
        <location>Cell membrane</location>
        <topology>Peripheral membrane protein</topology>
    </subcellularLocation>
</comment>
<gene>
    <name type="primary">nin</name>
    <name type="synonym">comJ</name>
    <name type="ordered locus">BSU03420</name>
</gene>
<feature type="chain" id="PRO_0000096843" description="DNA-entry nuclease inhibitor">
    <location>
        <begin position="1"/>
        <end position="132"/>
    </location>
</feature>
<feature type="strand" evidence="1">
    <location>
        <begin position="3"/>
        <end position="5"/>
    </location>
</feature>
<feature type="strand" evidence="1">
    <location>
        <begin position="8"/>
        <end position="11"/>
    </location>
</feature>
<feature type="strand" evidence="1">
    <location>
        <begin position="16"/>
        <end position="21"/>
    </location>
</feature>
<feature type="helix" evidence="1">
    <location>
        <begin position="33"/>
        <end position="38"/>
    </location>
</feature>
<feature type="strand" evidence="1">
    <location>
        <begin position="40"/>
        <end position="43"/>
    </location>
</feature>
<feature type="strand" evidence="1">
    <location>
        <begin position="46"/>
        <end position="50"/>
    </location>
</feature>
<feature type="strand" evidence="1">
    <location>
        <begin position="52"/>
        <end position="64"/>
    </location>
</feature>
<feature type="strand" evidence="1">
    <location>
        <begin position="73"/>
        <end position="85"/>
    </location>
</feature>
<feature type="strand" evidence="1">
    <location>
        <begin position="87"/>
        <end position="90"/>
    </location>
</feature>
<feature type="strand" evidence="1">
    <location>
        <begin position="97"/>
        <end position="99"/>
    </location>
</feature>
<feature type="strand" evidence="1">
    <location>
        <begin position="103"/>
        <end position="113"/>
    </location>
</feature>
<feature type="turn" evidence="1">
    <location>
        <begin position="115"/>
        <end position="117"/>
    </location>
</feature>
<feature type="strand" evidence="1">
    <location>
        <begin position="124"/>
        <end position="131"/>
    </location>
</feature>
<evidence type="ECO:0007829" key="1">
    <source>
        <dbReference type="PDB" id="4MQD"/>
    </source>
</evidence>
<keyword id="KW-0002">3D-structure</keyword>
<keyword id="KW-1003">Cell membrane</keyword>
<keyword id="KW-0178">Competence</keyword>
<keyword id="KW-0472">Membrane</keyword>
<keyword id="KW-1185">Reference proteome</keyword>
<accession>P12669</accession>
<reference key="1">
    <citation type="journal article" date="1988" name="J. Bacteriol.">
        <title>Transformation in Bacillus subtilis: involvement of the 17-kilodalton DNA-entry nuclease and the competence-specific 18-kilodalton protein.</title>
        <authorList>
            <person name="Vosman B."/>
            <person name="Kuiken G."/>
            <person name="Kooistra J."/>
            <person name="Venema G."/>
        </authorList>
    </citation>
    <scope>NUCLEOTIDE SEQUENCE [GENOMIC DNA]</scope>
</reference>
<reference key="2">
    <citation type="journal article" date="1995" name="Microbiology">
        <title>A 10 kb nucleotide sequence at the 5' flanking region (32 degrees) of srfAA of the Bacillus subtilis chromosome.</title>
        <authorList>
            <person name="Fujishima Y."/>
            <person name="Yamane K."/>
        </authorList>
    </citation>
    <scope>NUCLEOTIDE SEQUENCE [GENOMIC DNA]</scope>
    <source>
        <strain>168</strain>
    </source>
</reference>
<reference key="3">
    <citation type="journal article" date="1996" name="Microbiology">
        <title>The 25 degrees-36 degrees region of the Bacillus subtilis chromosome: determination of the sequence of a 146 kb segment and identification of 113 genes.</title>
        <authorList>
            <person name="Yamane K."/>
            <person name="Kumano M."/>
            <person name="Kurita K."/>
        </authorList>
    </citation>
    <scope>NUCLEOTIDE SEQUENCE [GENOMIC DNA]</scope>
    <source>
        <strain>168</strain>
    </source>
</reference>
<reference key="4">
    <citation type="journal article" date="1997" name="Nature">
        <title>The complete genome sequence of the Gram-positive bacterium Bacillus subtilis.</title>
        <authorList>
            <person name="Kunst F."/>
            <person name="Ogasawara N."/>
            <person name="Moszer I."/>
            <person name="Albertini A.M."/>
            <person name="Alloni G."/>
            <person name="Azevedo V."/>
            <person name="Bertero M.G."/>
            <person name="Bessieres P."/>
            <person name="Bolotin A."/>
            <person name="Borchert S."/>
            <person name="Borriss R."/>
            <person name="Boursier L."/>
            <person name="Brans A."/>
            <person name="Braun M."/>
            <person name="Brignell S.C."/>
            <person name="Bron S."/>
            <person name="Brouillet S."/>
            <person name="Bruschi C.V."/>
            <person name="Caldwell B."/>
            <person name="Capuano V."/>
            <person name="Carter N.M."/>
            <person name="Choi S.-K."/>
            <person name="Codani J.-J."/>
            <person name="Connerton I.F."/>
            <person name="Cummings N.J."/>
            <person name="Daniel R.A."/>
            <person name="Denizot F."/>
            <person name="Devine K.M."/>
            <person name="Duesterhoeft A."/>
            <person name="Ehrlich S.D."/>
            <person name="Emmerson P.T."/>
            <person name="Entian K.-D."/>
            <person name="Errington J."/>
            <person name="Fabret C."/>
            <person name="Ferrari E."/>
            <person name="Foulger D."/>
            <person name="Fritz C."/>
            <person name="Fujita M."/>
            <person name="Fujita Y."/>
            <person name="Fuma S."/>
            <person name="Galizzi A."/>
            <person name="Galleron N."/>
            <person name="Ghim S.-Y."/>
            <person name="Glaser P."/>
            <person name="Goffeau A."/>
            <person name="Golightly E.J."/>
            <person name="Grandi G."/>
            <person name="Guiseppi G."/>
            <person name="Guy B.J."/>
            <person name="Haga K."/>
            <person name="Haiech J."/>
            <person name="Harwood C.R."/>
            <person name="Henaut A."/>
            <person name="Hilbert H."/>
            <person name="Holsappel S."/>
            <person name="Hosono S."/>
            <person name="Hullo M.-F."/>
            <person name="Itaya M."/>
            <person name="Jones L.-M."/>
            <person name="Joris B."/>
            <person name="Karamata D."/>
            <person name="Kasahara Y."/>
            <person name="Klaerr-Blanchard M."/>
            <person name="Klein C."/>
            <person name="Kobayashi Y."/>
            <person name="Koetter P."/>
            <person name="Koningstein G."/>
            <person name="Krogh S."/>
            <person name="Kumano M."/>
            <person name="Kurita K."/>
            <person name="Lapidus A."/>
            <person name="Lardinois S."/>
            <person name="Lauber J."/>
            <person name="Lazarevic V."/>
            <person name="Lee S.-M."/>
            <person name="Levine A."/>
            <person name="Liu H."/>
            <person name="Masuda S."/>
            <person name="Mauel C."/>
            <person name="Medigue C."/>
            <person name="Medina N."/>
            <person name="Mellado R.P."/>
            <person name="Mizuno M."/>
            <person name="Moestl D."/>
            <person name="Nakai S."/>
            <person name="Noback M."/>
            <person name="Noone D."/>
            <person name="O'Reilly M."/>
            <person name="Ogawa K."/>
            <person name="Ogiwara A."/>
            <person name="Oudega B."/>
            <person name="Park S.-H."/>
            <person name="Parro V."/>
            <person name="Pohl T.M."/>
            <person name="Portetelle D."/>
            <person name="Porwollik S."/>
            <person name="Prescott A.M."/>
            <person name="Presecan E."/>
            <person name="Pujic P."/>
            <person name="Purnelle B."/>
            <person name="Rapoport G."/>
            <person name="Rey M."/>
            <person name="Reynolds S."/>
            <person name="Rieger M."/>
            <person name="Rivolta C."/>
            <person name="Rocha E."/>
            <person name="Roche B."/>
            <person name="Rose M."/>
            <person name="Sadaie Y."/>
            <person name="Sato T."/>
            <person name="Scanlan E."/>
            <person name="Schleich S."/>
            <person name="Schroeter R."/>
            <person name="Scoffone F."/>
            <person name="Sekiguchi J."/>
            <person name="Sekowska A."/>
            <person name="Seror S.J."/>
            <person name="Serror P."/>
            <person name="Shin B.-S."/>
            <person name="Soldo B."/>
            <person name="Sorokin A."/>
            <person name="Tacconi E."/>
            <person name="Takagi T."/>
            <person name="Takahashi H."/>
            <person name="Takemaru K."/>
            <person name="Takeuchi M."/>
            <person name="Tamakoshi A."/>
            <person name="Tanaka T."/>
            <person name="Terpstra P."/>
            <person name="Tognoni A."/>
            <person name="Tosato V."/>
            <person name="Uchiyama S."/>
            <person name="Vandenbol M."/>
            <person name="Vannier F."/>
            <person name="Vassarotti A."/>
            <person name="Viari A."/>
            <person name="Wambutt R."/>
            <person name="Wedler E."/>
            <person name="Wedler H."/>
            <person name="Weitzenegger T."/>
            <person name="Winters P."/>
            <person name="Wipat A."/>
            <person name="Yamamoto H."/>
            <person name="Yamane K."/>
            <person name="Yasumoto K."/>
            <person name="Yata K."/>
            <person name="Yoshida K."/>
            <person name="Yoshikawa H.-F."/>
            <person name="Zumstein E."/>
            <person name="Yoshikawa H."/>
            <person name="Danchin A."/>
        </authorList>
    </citation>
    <scope>NUCLEOTIDE SEQUENCE [LARGE SCALE GENOMIC DNA]</scope>
    <source>
        <strain>168</strain>
    </source>
</reference>
<reference key="5">
    <citation type="journal article" date="1995" name="Mol. Microbiol.">
        <title>Differential expression of two closely related deoxyribonuclease genes, nucA and nucB, in Bacillus subtilis.</title>
        <authorList>
            <person name="van Sinderen D."/>
            <person name="Kiewiet R."/>
            <person name="Venema G."/>
        </authorList>
    </citation>
    <scope>NUCLEOTIDE SEQUENCE [GENOMIC DNA] OF 1-40</scope>
</reference>
<proteinExistence type="evidence at protein level"/>
<dbReference type="EMBL" id="M21672">
    <property type="protein sequence ID" value="AAA22413.1"/>
    <property type="molecule type" value="Genomic_DNA"/>
</dbReference>
<dbReference type="EMBL" id="D30762">
    <property type="protein sequence ID" value="BAA06430.1"/>
    <property type="molecule type" value="Genomic_DNA"/>
</dbReference>
<dbReference type="EMBL" id="D50453">
    <property type="protein sequence ID" value="BAA08976.1"/>
    <property type="molecule type" value="Genomic_DNA"/>
</dbReference>
<dbReference type="EMBL" id="AL009126">
    <property type="protein sequence ID" value="CAB12136.1"/>
    <property type="molecule type" value="Genomic_DNA"/>
</dbReference>
<dbReference type="PIR" id="B31100">
    <property type="entry name" value="B31100"/>
</dbReference>
<dbReference type="RefSeq" id="NP_388224.1">
    <property type="nucleotide sequence ID" value="NC_000964.3"/>
</dbReference>
<dbReference type="RefSeq" id="WP_003246342.1">
    <property type="nucleotide sequence ID" value="NZ_OZ025638.1"/>
</dbReference>
<dbReference type="PDB" id="4MQD">
    <property type="method" value="X-ray"/>
    <property type="resolution" value="2.16 A"/>
    <property type="chains" value="A/B/C/D=1-132"/>
</dbReference>
<dbReference type="PDBsum" id="4MQD"/>
<dbReference type="SMR" id="P12669"/>
<dbReference type="FunCoup" id="P12669">
    <property type="interactions" value="41"/>
</dbReference>
<dbReference type="STRING" id="224308.BSU03420"/>
<dbReference type="jPOST" id="P12669"/>
<dbReference type="PaxDb" id="224308-BSU03420"/>
<dbReference type="DNASU" id="938312"/>
<dbReference type="EnsemblBacteria" id="CAB12136">
    <property type="protein sequence ID" value="CAB12136"/>
    <property type="gene ID" value="BSU_03420"/>
</dbReference>
<dbReference type="GeneID" id="938312"/>
<dbReference type="KEGG" id="bsu:BSU03420"/>
<dbReference type="PATRIC" id="fig|224308.179.peg.359"/>
<dbReference type="eggNOG" id="ENOG502ZSTE">
    <property type="taxonomic scope" value="Bacteria"/>
</dbReference>
<dbReference type="InParanoid" id="P12669"/>
<dbReference type="OrthoDB" id="9182344at2"/>
<dbReference type="BioCyc" id="BSUB:BSU03420-MONOMER"/>
<dbReference type="EvolutionaryTrace" id="P12669"/>
<dbReference type="Proteomes" id="UP000001570">
    <property type="component" value="Chromosome"/>
</dbReference>
<dbReference type="GO" id="GO:0005886">
    <property type="term" value="C:plasma membrane"/>
    <property type="evidence" value="ECO:0007669"/>
    <property type="project" value="UniProtKB-SubCell"/>
</dbReference>
<dbReference type="GO" id="GO:0030420">
    <property type="term" value="P:establishment of competence for transformation"/>
    <property type="evidence" value="ECO:0007669"/>
    <property type="project" value="UniProtKB-KW"/>
</dbReference>
<dbReference type="Gene3D" id="2.60.34.30">
    <property type="entry name" value="Competence, DNA-entry nuclease inhibitor, ComJ"/>
    <property type="match status" value="1"/>
</dbReference>
<dbReference type="InterPro" id="IPR038691">
    <property type="entry name" value="ComJ_sf"/>
</dbReference>
<dbReference type="InterPro" id="IPR020354">
    <property type="entry name" value="Competence_nuclease_inhibitor"/>
</dbReference>
<dbReference type="Pfam" id="PF11033">
    <property type="entry name" value="ComJ"/>
    <property type="match status" value="1"/>
</dbReference>
<sequence>MIKSWKPQELSISYHQFTVFQKDSTPPVMDWTDEAIEKGYAAADGAISFEAQRNTKAFILFRLNSSETVNSYEKKVTVPFHVTENGIHIESIMSKRLSFDLPKGDYQLTCWTVPAEMSDLHADTYIIDAVSV</sequence>
<protein>
    <recommendedName>
        <fullName>DNA-entry nuclease inhibitor</fullName>
    </recommendedName>
    <alternativeName>
        <fullName>Competence protein J</fullName>
    </alternativeName>
</protein>
<name>NIN_BACSU</name>
<organism>
    <name type="scientific">Bacillus subtilis (strain 168)</name>
    <dbReference type="NCBI Taxonomy" id="224308"/>
    <lineage>
        <taxon>Bacteria</taxon>
        <taxon>Bacillati</taxon>
        <taxon>Bacillota</taxon>
        <taxon>Bacilli</taxon>
        <taxon>Bacillales</taxon>
        <taxon>Bacillaceae</taxon>
        <taxon>Bacillus</taxon>
    </lineage>
</organism>